<reference key="1">
    <citation type="journal article" date="2006" name="Proc. Natl. Acad. Sci. U.S.A.">
        <title>The partitioned Rhizobium etli genome: genetic and metabolic redundancy in seven interacting replicons.</title>
        <authorList>
            <person name="Gonzalez V."/>
            <person name="Santamaria R.I."/>
            <person name="Bustos P."/>
            <person name="Hernandez-Gonzalez I."/>
            <person name="Medrano-Soto A."/>
            <person name="Moreno-Hagelsieb G."/>
            <person name="Janga S.C."/>
            <person name="Ramirez M.A."/>
            <person name="Jimenez-Jacinto V."/>
            <person name="Collado-Vides J."/>
            <person name="Davila G."/>
        </authorList>
    </citation>
    <scope>NUCLEOTIDE SEQUENCE [LARGE SCALE GENOMIC DNA]</scope>
    <source>
        <strain>ATCC 51251 / DSM 11541 / JCM 21823 / NBRC 15573 / CFN 42</strain>
    </source>
</reference>
<proteinExistence type="inferred from homology"/>
<accession>Q2KD99</accession>
<feature type="chain" id="PRO_1000053630" description="Protein GrpE">
    <location>
        <begin position="1"/>
        <end position="211"/>
    </location>
</feature>
<feature type="region of interest" description="Disordered" evidence="2">
    <location>
        <begin position="1"/>
        <end position="43"/>
    </location>
</feature>
<feature type="compositionally biased region" description="Low complexity" evidence="2">
    <location>
        <begin position="11"/>
        <end position="23"/>
    </location>
</feature>
<feature type="compositionally biased region" description="Basic and acidic residues" evidence="2">
    <location>
        <begin position="33"/>
        <end position="43"/>
    </location>
</feature>
<protein>
    <recommendedName>
        <fullName evidence="1">Protein GrpE</fullName>
    </recommendedName>
    <alternativeName>
        <fullName evidence="1">HSP-70 cofactor</fullName>
    </alternativeName>
</protein>
<gene>
    <name evidence="1" type="primary">grpE</name>
    <name type="ordered locus">RHE_CH00365</name>
</gene>
<name>GRPE_RHIEC</name>
<sequence>MTDETTKNGPDATAADAAADAAANVEIDNSVQEEAKQPDPLELLKAENAELRDRYLRLAAEMDNLRRRTEREVKDAKSYSVAGFARDMLAVSDNLRRALDAISPEAKATADAGLTTLIEGVEMTERSMLSALERHGVRKLEPVGQKFDPNFHQAMFEVPNSEVPNNTVVQVVQAGFTIGERVLRPAMVGVAKGGPKPVEAEINSVFDEKDA</sequence>
<organism>
    <name type="scientific">Rhizobium etli (strain ATCC 51251 / DSM 11541 / JCM 21823 / NBRC 15573 / CFN 42)</name>
    <dbReference type="NCBI Taxonomy" id="347834"/>
    <lineage>
        <taxon>Bacteria</taxon>
        <taxon>Pseudomonadati</taxon>
        <taxon>Pseudomonadota</taxon>
        <taxon>Alphaproteobacteria</taxon>
        <taxon>Hyphomicrobiales</taxon>
        <taxon>Rhizobiaceae</taxon>
        <taxon>Rhizobium/Agrobacterium group</taxon>
        <taxon>Rhizobium</taxon>
    </lineage>
</organism>
<keyword id="KW-0143">Chaperone</keyword>
<keyword id="KW-0963">Cytoplasm</keyword>
<keyword id="KW-1185">Reference proteome</keyword>
<keyword id="KW-0346">Stress response</keyword>
<dbReference type="EMBL" id="CP000133">
    <property type="protein sequence ID" value="ABC89187.1"/>
    <property type="molecule type" value="Genomic_DNA"/>
</dbReference>
<dbReference type="RefSeq" id="WP_011423749.1">
    <property type="nucleotide sequence ID" value="NC_007761.1"/>
</dbReference>
<dbReference type="SMR" id="Q2KD99"/>
<dbReference type="KEGG" id="ret:RHE_CH00365"/>
<dbReference type="eggNOG" id="COG0576">
    <property type="taxonomic scope" value="Bacteria"/>
</dbReference>
<dbReference type="HOGENOM" id="CLU_057217_0_2_5"/>
<dbReference type="OrthoDB" id="9789811at2"/>
<dbReference type="Proteomes" id="UP000001936">
    <property type="component" value="Chromosome"/>
</dbReference>
<dbReference type="GO" id="GO:0005737">
    <property type="term" value="C:cytoplasm"/>
    <property type="evidence" value="ECO:0007669"/>
    <property type="project" value="UniProtKB-SubCell"/>
</dbReference>
<dbReference type="GO" id="GO:0000774">
    <property type="term" value="F:adenyl-nucleotide exchange factor activity"/>
    <property type="evidence" value="ECO:0007669"/>
    <property type="project" value="InterPro"/>
</dbReference>
<dbReference type="GO" id="GO:0042803">
    <property type="term" value="F:protein homodimerization activity"/>
    <property type="evidence" value="ECO:0007669"/>
    <property type="project" value="InterPro"/>
</dbReference>
<dbReference type="GO" id="GO:0051087">
    <property type="term" value="F:protein-folding chaperone binding"/>
    <property type="evidence" value="ECO:0007669"/>
    <property type="project" value="InterPro"/>
</dbReference>
<dbReference type="GO" id="GO:0051082">
    <property type="term" value="F:unfolded protein binding"/>
    <property type="evidence" value="ECO:0007669"/>
    <property type="project" value="TreeGrafter"/>
</dbReference>
<dbReference type="GO" id="GO:0006457">
    <property type="term" value="P:protein folding"/>
    <property type="evidence" value="ECO:0007669"/>
    <property type="project" value="InterPro"/>
</dbReference>
<dbReference type="CDD" id="cd00446">
    <property type="entry name" value="GrpE"/>
    <property type="match status" value="1"/>
</dbReference>
<dbReference type="FunFam" id="2.30.22.10:FF:000001">
    <property type="entry name" value="Protein GrpE"/>
    <property type="match status" value="1"/>
</dbReference>
<dbReference type="Gene3D" id="3.90.20.20">
    <property type="match status" value="1"/>
</dbReference>
<dbReference type="Gene3D" id="2.30.22.10">
    <property type="entry name" value="Head domain of nucleotide exchange factor GrpE"/>
    <property type="match status" value="1"/>
</dbReference>
<dbReference type="HAMAP" id="MF_01151">
    <property type="entry name" value="GrpE"/>
    <property type="match status" value="1"/>
</dbReference>
<dbReference type="InterPro" id="IPR000740">
    <property type="entry name" value="GrpE"/>
</dbReference>
<dbReference type="InterPro" id="IPR013805">
    <property type="entry name" value="GrpE_coiled_coil"/>
</dbReference>
<dbReference type="InterPro" id="IPR009012">
    <property type="entry name" value="GrpE_head"/>
</dbReference>
<dbReference type="NCBIfam" id="NF010738">
    <property type="entry name" value="PRK14140.1"/>
    <property type="match status" value="1"/>
</dbReference>
<dbReference type="NCBIfam" id="NF010739">
    <property type="entry name" value="PRK14141.1"/>
    <property type="match status" value="1"/>
</dbReference>
<dbReference type="NCBIfam" id="NF010748">
    <property type="entry name" value="PRK14150.1"/>
    <property type="match status" value="1"/>
</dbReference>
<dbReference type="PANTHER" id="PTHR21237">
    <property type="entry name" value="GRPE PROTEIN"/>
    <property type="match status" value="1"/>
</dbReference>
<dbReference type="PANTHER" id="PTHR21237:SF23">
    <property type="entry name" value="GRPE PROTEIN HOMOLOG, MITOCHONDRIAL"/>
    <property type="match status" value="1"/>
</dbReference>
<dbReference type="Pfam" id="PF01025">
    <property type="entry name" value="GrpE"/>
    <property type="match status" value="1"/>
</dbReference>
<dbReference type="PRINTS" id="PR00773">
    <property type="entry name" value="GRPEPROTEIN"/>
</dbReference>
<dbReference type="SUPFAM" id="SSF58014">
    <property type="entry name" value="Coiled-coil domain of nucleotide exchange factor GrpE"/>
    <property type="match status" value="1"/>
</dbReference>
<dbReference type="SUPFAM" id="SSF51064">
    <property type="entry name" value="Head domain of nucleotide exchange factor GrpE"/>
    <property type="match status" value="1"/>
</dbReference>
<dbReference type="PROSITE" id="PS01071">
    <property type="entry name" value="GRPE"/>
    <property type="match status" value="1"/>
</dbReference>
<comment type="function">
    <text evidence="1">Participates actively in the response to hyperosmotic and heat shock by preventing the aggregation of stress-denatured proteins, in association with DnaK and GrpE. It is the nucleotide exchange factor for DnaK and may function as a thermosensor. Unfolded proteins bind initially to DnaJ; upon interaction with the DnaJ-bound protein, DnaK hydrolyzes its bound ATP, resulting in the formation of a stable complex. GrpE releases ADP from DnaK; ATP binding to DnaK triggers the release of the substrate protein, thus completing the reaction cycle. Several rounds of ATP-dependent interactions between DnaJ, DnaK and GrpE are required for fully efficient folding.</text>
</comment>
<comment type="subunit">
    <text evidence="1">Homodimer.</text>
</comment>
<comment type="subcellular location">
    <subcellularLocation>
        <location evidence="1">Cytoplasm</location>
    </subcellularLocation>
</comment>
<comment type="similarity">
    <text evidence="1">Belongs to the GrpE family.</text>
</comment>
<evidence type="ECO:0000255" key="1">
    <source>
        <dbReference type="HAMAP-Rule" id="MF_01151"/>
    </source>
</evidence>
<evidence type="ECO:0000256" key="2">
    <source>
        <dbReference type="SAM" id="MobiDB-lite"/>
    </source>
</evidence>